<sequence>MLIDWFTVIAELVNFLILVWLLKRFLYEPVLKAIDEREKKIASELQHAADVEKEAESRLIELQRKNEAFDNAHAQMIKDAEQEAVEEKRTLLNEAHREYDALRMRLQETLKHEETSLESRVTGRISAEVFSIARKVLQDLSGSSLEAQIADVFCQRLRESDPEDVAAMKDAVSRKSLNPLVRSTFPLSSSLQERIQAVVRDVFSIDTQLRFEEGDDMVGGIELSMNGHSVSWSVRSYLDSLEKMTAELLEGAE</sequence>
<proteinExistence type="inferred from homology"/>
<name>ATPF1_PROA2</name>
<dbReference type="EMBL" id="CP001108">
    <property type="protein sequence ID" value="ACF45937.1"/>
    <property type="molecule type" value="Genomic_DNA"/>
</dbReference>
<dbReference type="RefSeq" id="WP_012505474.1">
    <property type="nucleotide sequence ID" value="NC_011059.1"/>
</dbReference>
<dbReference type="SMR" id="B4S7A0"/>
<dbReference type="STRING" id="290512.Paes_0894"/>
<dbReference type="KEGG" id="paa:Paes_0894"/>
<dbReference type="eggNOG" id="COG0711">
    <property type="taxonomic scope" value="Bacteria"/>
</dbReference>
<dbReference type="HOGENOM" id="CLU_070737_0_0_10"/>
<dbReference type="Proteomes" id="UP000002725">
    <property type="component" value="Chromosome"/>
</dbReference>
<dbReference type="GO" id="GO:0005886">
    <property type="term" value="C:plasma membrane"/>
    <property type="evidence" value="ECO:0007669"/>
    <property type="project" value="UniProtKB-SubCell"/>
</dbReference>
<dbReference type="GO" id="GO:0045259">
    <property type="term" value="C:proton-transporting ATP synthase complex"/>
    <property type="evidence" value="ECO:0007669"/>
    <property type="project" value="UniProtKB-KW"/>
</dbReference>
<dbReference type="GO" id="GO:0046933">
    <property type="term" value="F:proton-transporting ATP synthase activity, rotational mechanism"/>
    <property type="evidence" value="ECO:0007669"/>
    <property type="project" value="UniProtKB-UniRule"/>
</dbReference>
<dbReference type="GO" id="GO:0046961">
    <property type="term" value="F:proton-transporting ATPase activity, rotational mechanism"/>
    <property type="evidence" value="ECO:0007669"/>
    <property type="project" value="TreeGrafter"/>
</dbReference>
<dbReference type="CDD" id="cd06503">
    <property type="entry name" value="ATP-synt_Fo_b"/>
    <property type="match status" value="1"/>
</dbReference>
<dbReference type="HAMAP" id="MF_01398">
    <property type="entry name" value="ATP_synth_b_bprime"/>
    <property type="match status" value="1"/>
</dbReference>
<dbReference type="InterPro" id="IPR017707">
    <property type="entry name" value="Alt_ATP_synth_F0_bsu"/>
</dbReference>
<dbReference type="InterPro" id="IPR002146">
    <property type="entry name" value="ATP_synth_b/b'su_bac/chlpt"/>
</dbReference>
<dbReference type="InterPro" id="IPR050059">
    <property type="entry name" value="ATP_synthase_B_chain"/>
</dbReference>
<dbReference type="NCBIfam" id="TIGR03321">
    <property type="entry name" value="alt_F1F0_F0_B"/>
    <property type="match status" value="1"/>
</dbReference>
<dbReference type="PANTHER" id="PTHR33445">
    <property type="entry name" value="ATP SYNTHASE SUBUNIT B', CHLOROPLASTIC"/>
    <property type="match status" value="1"/>
</dbReference>
<dbReference type="PANTHER" id="PTHR33445:SF2">
    <property type="entry name" value="ATP SYNTHASE SUBUNIT B', CHLOROPLASTIC"/>
    <property type="match status" value="1"/>
</dbReference>
<dbReference type="Pfam" id="PF00430">
    <property type="entry name" value="ATP-synt_B"/>
    <property type="match status" value="1"/>
</dbReference>
<accession>B4S7A0</accession>
<keyword id="KW-0066">ATP synthesis</keyword>
<keyword id="KW-0997">Cell inner membrane</keyword>
<keyword id="KW-1003">Cell membrane</keyword>
<keyword id="KW-0138">CF(0)</keyword>
<keyword id="KW-0375">Hydrogen ion transport</keyword>
<keyword id="KW-0406">Ion transport</keyword>
<keyword id="KW-0472">Membrane</keyword>
<keyword id="KW-0812">Transmembrane</keyword>
<keyword id="KW-1133">Transmembrane helix</keyword>
<keyword id="KW-0813">Transport</keyword>
<protein>
    <recommendedName>
        <fullName evidence="2">ATP synthase subunit b 1</fullName>
    </recommendedName>
    <alternativeName>
        <fullName evidence="2">ATP synthase F(0) sector subunit b 1</fullName>
    </alternativeName>
    <alternativeName>
        <fullName evidence="2">ATPase subunit I 1</fullName>
    </alternativeName>
    <alternativeName>
        <fullName evidence="2">F-type ATPase subunit b 1</fullName>
        <shortName evidence="2">F-ATPase subunit b 1</shortName>
    </alternativeName>
</protein>
<gene>
    <name evidence="2" type="primary">atpF1</name>
    <name type="ordered locus">Paes_0894</name>
</gene>
<feature type="chain" id="PRO_0000368675" description="ATP synthase subunit b 1">
    <location>
        <begin position="1"/>
        <end position="253"/>
    </location>
</feature>
<feature type="transmembrane region" description="Helical" evidence="2">
    <location>
        <begin position="2"/>
        <end position="22"/>
    </location>
</feature>
<reference key="1">
    <citation type="submission" date="2008-06" db="EMBL/GenBank/DDBJ databases">
        <title>Complete sequence of chromosome of Prosthecochloris aestuarii DSM 271.</title>
        <authorList>
            <consortium name="US DOE Joint Genome Institute"/>
            <person name="Lucas S."/>
            <person name="Copeland A."/>
            <person name="Lapidus A."/>
            <person name="Glavina del Rio T."/>
            <person name="Dalin E."/>
            <person name="Tice H."/>
            <person name="Bruce D."/>
            <person name="Goodwin L."/>
            <person name="Pitluck S."/>
            <person name="Schmutz J."/>
            <person name="Larimer F."/>
            <person name="Land M."/>
            <person name="Hauser L."/>
            <person name="Kyrpides N."/>
            <person name="Anderson I."/>
            <person name="Liu Z."/>
            <person name="Li T."/>
            <person name="Zhao F."/>
            <person name="Overmann J."/>
            <person name="Bryant D.A."/>
            <person name="Richardson P."/>
        </authorList>
    </citation>
    <scope>NUCLEOTIDE SEQUENCE [LARGE SCALE GENOMIC DNA]</scope>
    <source>
        <strain>DSM 271 / SK 413</strain>
    </source>
</reference>
<organism>
    <name type="scientific">Prosthecochloris aestuarii (strain DSM 271 / SK 413)</name>
    <dbReference type="NCBI Taxonomy" id="290512"/>
    <lineage>
        <taxon>Bacteria</taxon>
        <taxon>Pseudomonadati</taxon>
        <taxon>Chlorobiota</taxon>
        <taxon>Chlorobiia</taxon>
        <taxon>Chlorobiales</taxon>
        <taxon>Chlorobiaceae</taxon>
        <taxon>Prosthecochloris</taxon>
    </lineage>
</organism>
<comment type="function">
    <text evidence="2">F(1)F(0) ATP synthase produces ATP from ADP in the presence of a proton or sodium gradient. F-type ATPases consist of two structural domains, F(1) containing the extramembraneous catalytic core and F(0) containing the membrane proton channel, linked together by a central stalk and a peripheral stalk. During catalysis, ATP synthesis in the catalytic domain of F(1) is coupled via a rotary mechanism of the central stalk subunits to proton translocation.</text>
</comment>
<comment type="function">
    <text evidence="2">Component of the F(0) channel, it forms part of the peripheral stalk, linking F(1) to F(0).</text>
</comment>
<comment type="subunit">
    <text evidence="1">F-type ATPases have 2 components, F(1) - the catalytic core - and F(0) - the membrane proton channel. F(1) has five subunits: alpha(3), beta(3), gamma(1), delta(1), epsilon(1). F(0) has four main subunits: a(1), b(2) and c(10-14). The alpha and beta chains form an alternating ring which encloses part of the gamma chain. F(1) is attached to F(0) by a central stalk formed by the gamma and epsilon chains, while a peripheral stalk is formed by the delta and b chains (By similarity).</text>
</comment>
<comment type="subcellular location">
    <subcellularLocation>
        <location evidence="2">Cell inner membrane</location>
        <topology evidence="2">Single-pass membrane protein</topology>
    </subcellularLocation>
</comment>
<comment type="similarity">
    <text evidence="2">Belongs to the ATPase B chain family.</text>
</comment>
<evidence type="ECO:0000250" key="1"/>
<evidence type="ECO:0000255" key="2">
    <source>
        <dbReference type="HAMAP-Rule" id="MF_01398"/>
    </source>
</evidence>